<name>ATG16_CANGA</name>
<gene>
    <name type="primary">ATG16</name>
    <name type="ordered locus">CAGL0M09471g</name>
</gene>
<organism>
    <name type="scientific">Candida glabrata (strain ATCC 2001 / BCRC 20586 / JCM 3761 / NBRC 0622 / NRRL Y-65 / CBS 138)</name>
    <name type="common">Yeast</name>
    <name type="synonym">Nakaseomyces glabratus</name>
    <dbReference type="NCBI Taxonomy" id="284593"/>
    <lineage>
        <taxon>Eukaryota</taxon>
        <taxon>Fungi</taxon>
        <taxon>Dikarya</taxon>
        <taxon>Ascomycota</taxon>
        <taxon>Saccharomycotina</taxon>
        <taxon>Saccharomycetes</taxon>
        <taxon>Saccharomycetales</taxon>
        <taxon>Saccharomycetaceae</taxon>
        <taxon>Nakaseomyces</taxon>
    </lineage>
</organism>
<feature type="chain" id="PRO_0000218589" description="Autophagy protein 16">
    <location>
        <begin position="1"/>
        <end position="108"/>
    </location>
</feature>
<feature type="coiled-coil region" evidence="3">
    <location>
        <begin position="28"/>
        <end position="94"/>
    </location>
</feature>
<dbReference type="EMBL" id="CR380959">
    <property type="protein sequence ID" value="CAG62734.1"/>
    <property type="molecule type" value="Genomic_DNA"/>
</dbReference>
<dbReference type="RefSeq" id="XP_449756.1">
    <property type="nucleotide sequence ID" value="XM_449756.1"/>
</dbReference>
<dbReference type="SMR" id="Q6FJ38"/>
<dbReference type="FunCoup" id="Q6FJ38">
    <property type="interactions" value="49"/>
</dbReference>
<dbReference type="STRING" id="284593.Q6FJ38"/>
<dbReference type="EnsemblFungi" id="CAGL0M09471g-T">
    <property type="protein sequence ID" value="CAGL0M09471g-T-p1"/>
    <property type="gene ID" value="CAGL0M09471g"/>
</dbReference>
<dbReference type="KEGG" id="cgr:2891320"/>
<dbReference type="CGD" id="CAL0136947">
    <property type="gene designation" value="CAGL0M09471g"/>
</dbReference>
<dbReference type="VEuPathDB" id="FungiDB:CAGL0M09471g"/>
<dbReference type="eggNOG" id="ENOG502S6TV">
    <property type="taxonomic scope" value="Eukaryota"/>
</dbReference>
<dbReference type="HOGENOM" id="CLU_158825_0_0_1"/>
<dbReference type="InParanoid" id="Q6FJ38"/>
<dbReference type="OMA" id="QLRNKDY"/>
<dbReference type="Proteomes" id="UP000002428">
    <property type="component" value="Chromosome M"/>
</dbReference>
<dbReference type="GO" id="GO:0034274">
    <property type="term" value="C:Atg12-Atg5-Atg16 complex"/>
    <property type="evidence" value="ECO:0007669"/>
    <property type="project" value="EnsemblFungi"/>
</dbReference>
<dbReference type="GO" id="GO:0061908">
    <property type="term" value="C:phagophore"/>
    <property type="evidence" value="ECO:0007669"/>
    <property type="project" value="EnsemblFungi"/>
</dbReference>
<dbReference type="GO" id="GO:0034045">
    <property type="term" value="C:phagophore assembly site membrane"/>
    <property type="evidence" value="ECO:0007669"/>
    <property type="project" value="UniProtKB-SubCell"/>
</dbReference>
<dbReference type="GO" id="GO:0120095">
    <property type="term" value="C:vacuole-isolation membrane contact site"/>
    <property type="evidence" value="ECO:0007669"/>
    <property type="project" value="EnsemblFungi"/>
</dbReference>
<dbReference type="GO" id="GO:0019776">
    <property type="term" value="F:Atg8-family ligase activity"/>
    <property type="evidence" value="ECO:0007669"/>
    <property type="project" value="EnsemblFungi"/>
</dbReference>
<dbReference type="GO" id="GO:0042802">
    <property type="term" value="F:identical protein binding"/>
    <property type="evidence" value="ECO:0007669"/>
    <property type="project" value="EnsemblFungi"/>
</dbReference>
<dbReference type="GO" id="GO:0030674">
    <property type="term" value="F:protein-macromolecule adaptor activity"/>
    <property type="evidence" value="ECO:0007669"/>
    <property type="project" value="EnsemblFungi"/>
</dbReference>
<dbReference type="GO" id="GO:1905037">
    <property type="term" value="P:autophagosome organization"/>
    <property type="evidence" value="ECO:0007669"/>
    <property type="project" value="EnsemblFungi"/>
</dbReference>
<dbReference type="GO" id="GO:0000422">
    <property type="term" value="P:autophagy of mitochondrion"/>
    <property type="evidence" value="ECO:0007669"/>
    <property type="project" value="EnsemblFungi"/>
</dbReference>
<dbReference type="GO" id="GO:0032258">
    <property type="term" value="P:cytoplasm to vacuole targeting by the Cvt pathway"/>
    <property type="evidence" value="ECO:0007669"/>
    <property type="project" value="EnsemblFungi"/>
</dbReference>
<dbReference type="GO" id="GO:0034727">
    <property type="term" value="P:piecemeal microautophagy of the nucleus"/>
    <property type="evidence" value="ECO:0007669"/>
    <property type="project" value="EnsemblFungi"/>
</dbReference>
<dbReference type="CDD" id="cd22887">
    <property type="entry name" value="Atg16_CCD"/>
    <property type="match status" value="1"/>
</dbReference>
<dbReference type="Gene3D" id="1.20.5.170">
    <property type="match status" value="1"/>
</dbReference>
<dbReference type="InterPro" id="IPR013923">
    <property type="entry name" value="Autophagy-rel_prot_16_dom"/>
</dbReference>
<dbReference type="Pfam" id="PF08614">
    <property type="entry name" value="ATG16"/>
    <property type="match status" value="1"/>
</dbReference>
<evidence type="ECO:0000250" key="1"/>
<evidence type="ECO:0000250" key="2">
    <source>
        <dbReference type="UniProtKB" id="Q03818"/>
    </source>
</evidence>
<evidence type="ECO:0000255" key="3"/>
<evidence type="ECO:0000305" key="4"/>
<keyword id="KW-0072">Autophagy</keyword>
<keyword id="KW-0175">Coiled coil</keyword>
<keyword id="KW-0472">Membrane</keyword>
<keyword id="KW-0653">Protein transport</keyword>
<keyword id="KW-1185">Reference proteome</keyword>
<keyword id="KW-0813">Transport</keyword>
<sequence length="108" mass="12553">MLAERDTLEKNYCELFEVPVDGRSNDGDAMLLQEALRGKDNEIRMLEERLAVSSKNVERLNDELLGANLEANVLGQKLQDLQQEHDKLLERWMQRVRVEVDKMNAQLE</sequence>
<proteinExistence type="inferred from homology"/>
<comment type="function">
    <text evidence="1">Stabilizes the ATG5-ATG12 conjugate which is necessary for autophagy. The ATG5-ATG12/ATG16 complex is required for efficient promotion of ATG8-conjugation to phosphatidylethanolamine and ATG8 localization to the pre-autophagosomal structure (PAS). Also recruits ATG3 to the PAS. Involved in endoplasmic reticulum-specific autophagic process and is essential for the survival of cells subjected to severe ER stress (By similarity).</text>
</comment>
<comment type="subunit">
    <text evidence="1">Homodimer (By similarity). Part of the ATG5-ATG12/ATG16 complex. Several units of each may be present in this complex (By similarity).</text>
</comment>
<comment type="subcellular location">
    <subcellularLocation>
        <location evidence="2">Preautophagosomal structure membrane</location>
        <topology evidence="2">Peripheral membrane protein</topology>
    </subcellularLocation>
</comment>
<comment type="similarity">
    <text evidence="4">Belongs to the ATG16 family.</text>
</comment>
<accession>Q6FJ38</accession>
<reference key="1">
    <citation type="journal article" date="2004" name="Nature">
        <title>Genome evolution in yeasts.</title>
        <authorList>
            <person name="Dujon B."/>
            <person name="Sherman D."/>
            <person name="Fischer G."/>
            <person name="Durrens P."/>
            <person name="Casaregola S."/>
            <person name="Lafontaine I."/>
            <person name="de Montigny J."/>
            <person name="Marck C."/>
            <person name="Neuveglise C."/>
            <person name="Talla E."/>
            <person name="Goffard N."/>
            <person name="Frangeul L."/>
            <person name="Aigle M."/>
            <person name="Anthouard V."/>
            <person name="Babour A."/>
            <person name="Barbe V."/>
            <person name="Barnay S."/>
            <person name="Blanchin S."/>
            <person name="Beckerich J.-M."/>
            <person name="Beyne E."/>
            <person name="Bleykasten C."/>
            <person name="Boisrame A."/>
            <person name="Boyer J."/>
            <person name="Cattolico L."/>
            <person name="Confanioleri F."/>
            <person name="de Daruvar A."/>
            <person name="Despons L."/>
            <person name="Fabre E."/>
            <person name="Fairhead C."/>
            <person name="Ferry-Dumazet H."/>
            <person name="Groppi A."/>
            <person name="Hantraye F."/>
            <person name="Hennequin C."/>
            <person name="Jauniaux N."/>
            <person name="Joyet P."/>
            <person name="Kachouri R."/>
            <person name="Kerrest A."/>
            <person name="Koszul R."/>
            <person name="Lemaire M."/>
            <person name="Lesur I."/>
            <person name="Ma L."/>
            <person name="Muller H."/>
            <person name="Nicaud J.-M."/>
            <person name="Nikolski M."/>
            <person name="Oztas S."/>
            <person name="Ozier-Kalogeropoulos O."/>
            <person name="Pellenz S."/>
            <person name="Potier S."/>
            <person name="Richard G.-F."/>
            <person name="Straub M.-L."/>
            <person name="Suleau A."/>
            <person name="Swennen D."/>
            <person name="Tekaia F."/>
            <person name="Wesolowski-Louvel M."/>
            <person name="Westhof E."/>
            <person name="Wirth B."/>
            <person name="Zeniou-Meyer M."/>
            <person name="Zivanovic Y."/>
            <person name="Bolotin-Fukuhara M."/>
            <person name="Thierry A."/>
            <person name="Bouchier C."/>
            <person name="Caudron B."/>
            <person name="Scarpelli C."/>
            <person name="Gaillardin C."/>
            <person name="Weissenbach J."/>
            <person name="Wincker P."/>
            <person name="Souciet J.-L."/>
        </authorList>
    </citation>
    <scope>NUCLEOTIDE SEQUENCE [LARGE SCALE GENOMIC DNA]</scope>
    <source>
        <strain>ATCC 2001 / BCRC 20586 / JCM 3761 / NBRC 0622 / NRRL Y-65 / CBS 138</strain>
    </source>
</reference>
<protein>
    <recommendedName>
        <fullName>Autophagy protein 16</fullName>
    </recommendedName>
</protein>